<comment type="function">
    <text evidence="1">Removes the formyl group from the N-terminal Met of newly synthesized proteins. Requires at least a dipeptide for an efficient rate of reaction. N-terminal L-methionine is a prerequisite for activity but the enzyme has broad specificity at other positions.</text>
</comment>
<comment type="catalytic activity">
    <reaction evidence="1">
        <text>N-terminal N-formyl-L-methionyl-[peptide] + H2O = N-terminal L-methionyl-[peptide] + formate</text>
        <dbReference type="Rhea" id="RHEA:24420"/>
        <dbReference type="Rhea" id="RHEA-COMP:10639"/>
        <dbReference type="Rhea" id="RHEA-COMP:10640"/>
        <dbReference type="ChEBI" id="CHEBI:15377"/>
        <dbReference type="ChEBI" id="CHEBI:15740"/>
        <dbReference type="ChEBI" id="CHEBI:49298"/>
        <dbReference type="ChEBI" id="CHEBI:64731"/>
        <dbReference type="EC" id="3.5.1.88"/>
    </reaction>
</comment>
<comment type="cofactor">
    <cofactor evidence="1">
        <name>Fe(2+)</name>
        <dbReference type="ChEBI" id="CHEBI:29033"/>
    </cofactor>
    <text evidence="1">Binds 1 Fe(2+) ion.</text>
</comment>
<comment type="similarity">
    <text evidence="1">Belongs to the polypeptide deformylase family.</text>
</comment>
<sequence length="184" mass="20383">MITMKDIIKEGHPTLRKVAEPVPLPPSEEDKRILQSLLDYVKMSQDPELAAKYGLRPGIGLAAPQINVSKRMIAVHVTDENGTLYSYALFNPKIVSHSVQQCYLTTGEGCLSVDRDVPGYVLRYARITVTGTTLDGEEVTLRLKGLPAIVFQHEIDHLNGIMFYDRINPADPFQVPDGAIPIGR</sequence>
<accession>O31410</accession>
<feature type="chain" id="PRO_0000082738" description="Peptide deformylase 2">
    <location>
        <begin position="1"/>
        <end position="184"/>
    </location>
</feature>
<feature type="active site" evidence="1">
    <location>
        <position position="154"/>
    </location>
</feature>
<feature type="binding site" evidence="1">
    <location>
        <position position="110"/>
    </location>
    <ligand>
        <name>Fe cation</name>
        <dbReference type="ChEBI" id="CHEBI:24875"/>
    </ligand>
</feature>
<feature type="binding site" evidence="1">
    <location>
        <position position="153"/>
    </location>
    <ligand>
        <name>Fe cation</name>
        <dbReference type="ChEBI" id="CHEBI:24875"/>
    </ligand>
</feature>
<feature type="binding site" evidence="1">
    <location>
        <position position="157"/>
    </location>
    <ligand>
        <name>Fe cation</name>
        <dbReference type="ChEBI" id="CHEBI:24875"/>
    </ligand>
</feature>
<feature type="helix" evidence="2">
    <location>
        <begin position="4"/>
        <end position="6"/>
    </location>
</feature>
<feature type="helix" evidence="2">
    <location>
        <begin position="13"/>
        <end position="16"/>
    </location>
</feature>
<feature type="helix" evidence="2">
    <location>
        <begin position="28"/>
        <end position="44"/>
    </location>
</feature>
<feature type="helix" evidence="2">
    <location>
        <begin position="47"/>
        <end position="53"/>
    </location>
</feature>
<feature type="strand" evidence="2">
    <location>
        <begin position="59"/>
        <end position="62"/>
    </location>
</feature>
<feature type="helix" evidence="2">
    <location>
        <begin position="63"/>
        <end position="66"/>
    </location>
</feature>
<feature type="strand" evidence="2">
    <location>
        <begin position="70"/>
        <end position="78"/>
    </location>
</feature>
<feature type="strand" evidence="2">
    <location>
        <begin position="84"/>
        <end position="97"/>
    </location>
</feature>
<feature type="strand" evidence="2">
    <location>
        <begin position="99"/>
        <end position="104"/>
    </location>
</feature>
<feature type="strand" evidence="2">
    <location>
        <begin position="123"/>
        <end position="132"/>
    </location>
</feature>
<feature type="strand" evidence="2">
    <location>
        <begin position="138"/>
        <end position="144"/>
    </location>
</feature>
<feature type="helix" evidence="2">
    <location>
        <begin position="145"/>
        <end position="158"/>
    </location>
</feature>
<feature type="helix" evidence="2">
    <location>
        <begin position="163"/>
        <end position="166"/>
    </location>
</feature>
<feature type="strand" evidence="2">
    <location>
        <begin position="180"/>
        <end position="182"/>
    </location>
</feature>
<gene>
    <name evidence="1" type="primary">def2</name>
</gene>
<reference key="1">
    <citation type="journal article" date="1997" name="J. Mol. Biol.">
        <title>Structure-function relationships within the peptide deformylase family. Evidence for a conserved architecture of the active site involving three conserved motifs and a metal ion.</title>
        <authorList>
            <person name="Meinnel T."/>
            <person name="Lazennec C."/>
            <person name="Villoing S."/>
            <person name="Blanquet S."/>
        </authorList>
    </citation>
    <scope>NUCLEOTIDE SEQUENCE [GENOMIC DNA]</scope>
    <scope>CHARACTERIZATION</scope>
    <source>
        <strain>ATCC 1518</strain>
    </source>
</reference>
<organism>
    <name type="scientific">Geobacillus stearothermophilus</name>
    <name type="common">Bacillus stearothermophilus</name>
    <dbReference type="NCBI Taxonomy" id="1422"/>
    <lineage>
        <taxon>Bacteria</taxon>
        <taxon>Bacillati</taxon>
        <taxon>Bacillota</taxon>
        <taxon>Bacilli</taxon>
        <taxon>Bacillales</taxon>
        <taxon>Anoxybacillaceae</taxon>
        <taxon>Geobacillus</taxon>
    </lineage>
</organism>
<evidence type="ECO:0000255" key="1">
    <source>
        <dbReference type="HAMAP-Rule" id="MF_00163"/>
    </source>
</evidence>
<evidence type="ECO:0007829" key="2">
    <source>
        <dbReference type="PDB" id="1LQY"/>
    </source>
</evidence>
<keyword id="KW-0002">3D-structure</keyword>
<keyword id="KW-0378">Hydrolase</keyword>
<keyword id="KW-0408">Iron</keyword>
<keyword id="KW-0479">Metal-binding</keyword>
<keyword id="KW-0648">Protein biosynthesis</keyword>
<proteinExistence type="evidence at protein level"/>
<protein>
    <recommendedName>
        <fullName evidence="1">Peptide deformylase 2</fullName>
        <shortName evidence="1">PDF 2</shortName>
        <ecNumber evidence="1">3.5.1.88</ecNumber>
    </recommendedName>
    <alternativeName>
        <fullName evidence="1">Polypeptide deformylase 2</fullName>
    </alternativeName>
</protein>
<dbReference type="EC" id="3.5.1.88" evidence="1"/>
<dbReference type="EMBL" id="Y10549">
    <property type="protein sequence ID" value="CAA71581.1"/>
    <property type="molecule type" value="Genomic_DNA"/>
</dbReference>
<dbReference type="RefSeq" id="WP_033016217.1">
    <property type="nucleotide sequence ID" value="NZ_RCTK01000001.1"/>
</dbReference>
<dbReference type="PDB" id="1LQY">
    <property type="method" value="X-ray"/>
    <property type="resolution" value="1.90 A"/>
    <property type="chains" value="A=1-184"/>
</dbReference>
<dbReference type="PDBsum" id="1LQY"/>
<dbReference type="SMR" id="O31410"/>
<dbReference type="DrugBank" id="DB04310">
    <property type="generic name" value="2-[(Formyl-Hydroxy-Amino)-Methyl]-Heptanoic Acid [1-(2-Hydroxymethyl-Pyrrolidine-1-Carbonyl)-2-Methyl-Propyl]-Amide"/>
</dbReference>
<dbReference type="GeneID" id="89611726"/>
<dbReference type="OrthoDB" id="9784988at2"/>
<dbReference type="BRENDA" id="3.5.1.88">
    <property type="organism ID" value="623"/>
</dbReference>
<dbReference type="EvolutionaryTrace" id="O31410"/>
<dbReference type="GO" id="GO:0046872">
    <property type="term" value="F:metal ion binding"/>
    <property type="evidence" value="ECO:0007669"/>
    <property type="project" value="UniProtKB-KW"/>
</dbReference>
<dbReference type="GO" id="GO:0042586">
    <property type="term" value="F:peptide deformylase activity"/>
    <property type="evidence" value="ECO:0007669"/>
    <property type="project" value="UniProtKB-UniRule"/>
</dbReference>
<dbReference type="GO" id="GO:0043686">
    <property type="term" value="P:co-translational protein modification"/>
    <property type="evidence" value="ECO:0007669"/>
    <property type="project" value="TreeGrafter"/>
</dbReference>
<dbReference type="GO" id="GO:0006412">
    <property type="term" value="P:translation"/>
    <property type="evidence" value="ECO:0007669"/>
    <property type="project" value="UniProtKB-UniRule"/>
</dbReference>
<dbReference type="CDD" id="cd00487">
    <property type="entry name" value="Pep_deformylase"/>
    <property type="match status" value="1"/>
</dbReference>
<dbReference type="FunFam" id="3.90.45.10:FF:000002">
    <property type="entry name" value="Peptide deformylase"/>
    <property type="match status" value="1"/>
</dbReference>
<dbReference type="Gene3D" id="3.90.45.10">
    <property type="entry name" value="Peptide deformylase"/>
    <property type="match status" value="1"/>
</dbReference>
<dbReference type="HAMAP" id="MF_00163">
    <property type="entry name" value="Pep_deformylase"/>
    <property type="match status" value="1"/>
</dbReference>
<dbReference type="InterPro" id="IPR023635">
    <property type="entry name" value="Peptide_deformylase"/>
</dbReference>
<dbReference type="InterPro" id="IPR036821">
    <property type="entry name" value="Peptide_deformylase_sf"/>
</dbReference>
<dbReference type="NCBIfam" id="TIGR00079">
    <property type="entry name" value="pept_deformyl"/>
    <property type="match status" value="1"/>
</dbReference>
<dbReference type="PANTHER" id="PTHR10458">
    <property type="entry name" value="PEPTIDE DEFORMYLASE"/>
    <property type="match status" value="1"/>
</dbReference>
<dbReference type="PANTHER" id="PTHR10458:SF8">
    <property type="entry name" value="PEPTIDE DEFORMYLASE 2"/>
    <property type="match status" value="1"/>
</dbReference>
<dbReference type="Pfam" id="PF01327">
    <property type="entry name" value="Pep_deformylase"/>
    <property type="match status" value="1"/>
</dbReference>
<dbReference type="PIRSF" id="PIRSF004749">
    <property type="entry name" value="Pep_def"/>
    <property type="match status" value="1"/>
</dbReference>
<dbReference type="PRINTS" id="PR01576">
    <property type="entry name" value="PDEFORMYLASE"/>
</dbReference>
<dbReference type="SUPFAM" id="SSF56420">
    <property type="entry name" value="Peptide deformylase"/>
    <property type="match status" value="1"/>
</dbReference>
<name>DEF2_GEOSE</name>